<gene>
    <name evidence="1" type="primary">rppH</name>
    <name evidence="1" type="synonym">nudH</name>
    <name type="ordered locus">APP7_1984</name>
</gene>
<comment type="function">
    <text evidence="1">Accelerates the degradation of transcripts by removing pyrophosphate from the 5'-end of triphosphorylated RNA, leading to a more labile monophosphorylated state that can stimulate subsequent ribonuclease cleavage.</text>
</comment>
<comment type="cofactor">
    <cofactor evidence="1">
        <name>a divalent metal cation</name>
        <dbReference type="ChEBI" id="CHEBI:60240"/>
    </cofactor>
</comment>
<comment type="similarity">
    <text evidence="1">Belongs to the Nudix hydrolase family. RppH subfamily.</text>
</comment>
<proteinExistence type="inferred from homology"/>
<feature type="chain" id="PRO_1000115263" description="RNA pyrophosphohydrolase">
    <location>
        <begin position="1"/>
        <end position="206"/>
    </location>
</feature>
<feature type="domain" description="Nudix hydrolase" evidence="1">
    <location>
        <begin position="6"/>
        <end position="150"/>
    </location>
</feature>
<feature type="region of interest" description="Disordered" evidence="2">
    <location>
        <begin position="162"/>
        <end position="206"/>
    </location>
</feature>
<feature type="short sequence motif" description="Nudix box">
    <location>
        <begin position="38"/>
        <end position="59"/>
    </location>
</feature>
<feature type="compositionally biased region" description="Basic and acidic residues" evidence="2">
    <location>
        <begin position="162"/>
        <end position="191"/>
    </location>
</feature>
<accession>B3H2W6</accession>
<organism>
    <name type="scientific">Actinobacillus pleuropneumoniae serotype 7 (strain AP76)</name>
    <dbReference type="NCBI Taxonomy" id="537457"/>
    <lineage>
        <taxon>Bacteria</taxon>
        <taxon>Pseudomonadati</taxon>
        <taxon>Pseudomonadota</taxon>
        <taxon>Gammaproteobacteria</taxon>
        <taxon>Pasteurellales</taxon>
        <taxon>Pasteurellaceae</taxon>
        <taxon>Actinobacillus</taxon>
    </lineage>
</organism>
<evidence type="ECO:0000255" key="1">
    <source>
        <dbReference type="HAMAP-Rule" id="MF_00298"/>
    </source>
</evidence>
<evidence type="ECO:0000256" key="2">
    <source>
        <dbReference type="SAM" id="MobiDB-lite"/>
    </source>
</evidence>
<reference key="1">
    <citation type="submission" date="2008-06" db="EMBL/GenBank/DDBJ databases">
        <title>Genome and proteome analysis of A. pleuropneumoniae serotype 7.</title>
        <authorList>
            <person name="Linke B."/>
            <person name="Buettner F."/>
            <person name="Martinez-Arias R."/>
            <person name="Goesmann A."/>
            <person name="Baltes N."/>
            <person name="Tegetmeyer H."/>
            <person name="Singh M."/>
            <person name="Gerlach G.F."/>
        </authorList>
    </citation>
    <scope>NUCLEOTIDE SEQUENCE [LARGE SCALE GENOMIC DNA]</scope>
    <source>
        <strain>AP76</strain>
    </source>
</reference>
<sequence length="206" mass="24599">MIDFDGYRPNVGIVICNKAGQVLWAKRFGQNSWQFPQGGINEGENIETAMYRELYEEVGLTKKDVRLLWASKYWLKYKLPKRLVRSDGSQPVCIGQKQRWFLLQLLSDENLIDLKTTKSPEFDGWRWVSFWYPVRQVVSFKRDVYRKVMKEFAGVLLNESKKPETVEKPRVERTEKRDFQKRDNQKREFRKSARMWNNSHQKGKAQ</sequence>
<keyword id="KW-0378">Hydrolase</keyword>
<dbReference type="EC" id="3.6.1.-" evidence="1"/>
<dbReference type="EMBL" id="CP001091">
    <property type="protein sequence ID" value="ACE62636.1"/>
    <property type="molecule type" value="Genomic_DNA"/>
</dbReference>
<dbReference type="RefSeq" id="WP_005616282.1">
    <property type="nucleotide sequence ID" value="NC_010939.1"/>
</dbReference>
<dbReference type="SMR" id="B3H2W6"/>
<dbReference type="KEGG" id="apa:APP7_1984"/>
<dbReference type="HOGENOM" id="CLU_087195_3_2_6"/>
<dbReference type="Proteomes" id="UP000001226">
    <property type="component" value="Chromosome"/>
</dbReference>
<dbReference type="GO" id="GO:0005737">
    <property type="term" value="C:cytoplasm"/>
    <property type="evidence" value="ECO:0007669"/>
    <property type="project" value="TreeGrafter"/>
</dbReference>
<dbReference type="GO" id="GO:0034353">
    <property type="term" value="F:mRNA 5'-diphosphatase activity"/>
    <property type="evidence" value="ECO:0007669"/>
    <property type="project" value="TreeGrafter"/>
</dbReference>
<dbReference type="GO" id="GO:0006402">
    <property type="term" value="P:mRNA catabolic process"/>
    <property type="evidence" value="ECO:0007669"/>
    <property type="project" value="TreeGrafter"/>
</dbReference>
<dbReference type="CDD" id="cd03671">
    <property type="entry name" value="NUDIX_Ap4A_hydrolase_plant_like"/>
    <property type="match status" value="1"/>
</dbReference>
<dbReference type="FunFam" id="3.90.79.10:FF:000001">
    <property type="entry name" value="RNA pyrophosphohydrolase"/>
    <property type="match status" value="1"/>
</dbReference>
<dbReference type="Gene3D" id="3.90.79.10">
    <property type="entry name" value="Nucleoside Triphosphate Pyrophosphohydrolase"/>
    <property type="match status" value="1"/>
</dbReference>
<dbReference type="HAMAP" id="MF_00298">
    <property type="entry name" value="Nudix_RppH"/>
    <property type="match status" value="1"/>
</dbReference>
<dbReference type="InterPro" id="IPR020476">
    <property type="entry name" value="Nudix_hydrolase"/>
</dbReference>
<dbReference type="InterPro" id="IPR015797">
    <property type="entry name" value="NUDIX_hydrolase-like_dom_sf"/>
</dbReference>
<dbReference type="InterPro" id="IPR020084">
    <property type="entry name" value="NUDIX_hydrolase_CS"/>
</dbReference>
<dbReference type="InterPro" id="IPR000086">
    <property type="entry name" value="NUDIX_hydrolase_dom"/>
</dbReference>
<dbReference type="InterPro" id="IPR022927">
    <property type="entry name" value="RppH"/>
</dbReference>
<dbReference type="NCBIfam" id="NF001934">
    <property type="entry name" value="PRK00714.1-1"/>
    <property type="match status" value="1"/>
</dbReference>
<dbReference type="NCBIfam" id="NF001937">
    <property type="entry name" value="PRK00714.1-4"/>
    <property type="match status" value="1"/>
</dbReference>
<dbReference type="NCBIfam" id="NF001938">
    <property type="entry name" value="PRK00714.1-5"/>
    <property type="match status" value="1"/>
</dbReference>
<dbReference type="PANTHER" id="PTHR23114">
    <property type="entry name" value="M7GPPPN-MRNA HYDROLASE"/>
    <property type="match status" value="1"/>
</dbReference>
<dbReference type="PANTHER" id="PTHR23114:SF17">
    <property type="entry name" value="M7GPPPN-MRNA HYDROLASE"/>
    <property type="match status" value="1"/>
</dbReference>
<dbReference type="Pfam" id="PF00293">
    <property type="entry name" value="NUDIX"/>
    <property type="match status" value="1"/>
</dbReference>
<dbReference type="PRINTS" id="PR00502">
    <property type="entry name" value="NUDIXFAMILY"/>
</dbReference>
<dbReference type="SUPFAM" id="SSF55811">
    <property type="entry name" value="Nudix"/>
    <property type="match status" value="1"/>
</dbReference>
<dbReference type="PROSITE" id="PS51462">
    <property type="entry name" value="NUDIX"/>
    <property type="match status" value="1"/>
</dbReference>
<dbReference type="PROSITE" id="PS00893">
    <property type="entry name" value="NUDIX_BOX"/>
    <property type="match status" value="1"/>
</dbReference>
<protein>
    <recommendedName>
        <fullName evidence="1">RNA pyrophosphohydrolase</fullName>
        <ecNumber evidence="1">3.6.1.-</ecNumber>
    </recommendedName>
    <alternativeName>
        <fullName evidence="1">(Di)nucleoside polyphosphate hydrolase</fullName>
    </alternativeName>
</protein>
<name>RPPH_ACTP7</name>